<comment type="function">
    <text>Potential calcium-dependent cell-adhesion protein. May be involved in the establishment and maintenance of specific neuronal connections in the brain.</text>
</comment>
<comment type="subcellular location">
    <subcellularLocation>
        <location evidence="1">Cell membrane</location>
        <topology evidence="1">Single-pass type I membrane protein</topology>
    </subcellularLocation>
</comment>
<keyword id="KW-0106">Calcium</keyword>
<keyword id="KW-0130">Cell adhesion</keyword>
<keyword id="KW-1003">Cell membrane</keyword>
<keyword id="KW-0325">Glycoprotein</keyword>
<keyword id="KW-0472">Membrane</keyword>
<keyword id="KW-1185">Reference proteome</keyword>
<keyword id="KW-0677">Repeat</keyword>
<keyword id="KW-0732">Signal</keyword>
<keyword id="KW-0812">Transmembrane</keyword>
<keyword id="KW-1133">Transmembrane helix</keyword>
<proteinExistence type="inferred from homology"/>
<protein>
    <recommendedName>
        <fullName>Protocadherin gamma-B5</fullName>
        <shortName>PCDH-gamma-B5</shortName>
    </recommendedName>
</protein>
<reference key="1">
    <citation type="journal article" date="2005" name="Nature">
        <title>Initial sequence of the chimpanzee genome and comparison with the human genome.</title>
        <authorList>
            <consortium name="Chimpanzee sequencing and analysis consortium"/>
        </authorList>
    </citation>
    <scope>NUCLEOTIDE SEQUENCE [LARGE SCALE GENOMIC DNA]</scope>
</reference>
<reference key="2">
    <citation type="journal article" date="2005" name="Genetics">
        <title>Comparative genomics and diversifying selection of the clustered vertebrate protocadherin genes.</title>
        <authorList>
            <person name="Wu Q."/>
        </authorList>
    </citation>
    <scope>IDENTIFICATION</scope>
</reference>
<dbReference type="RefSeq" id="NP_001076034.1">
    <property type="nucleotide sequence ID" value="NM_001082565.4"/>
</dbReference>
<dbReference type="SMR" id="Q5DRA7"/>
<dbReference type="FunCoup" id="Q5DRA7">
    <property type="interactions" value="125"/>
</dbReference>
<dbReference type="GlyCosmos" id="Q5DRA7">
    <property type="glycosylation" value="2 sites, No reported glycans"/>
</dbReference>
<dbReference type="GeneID" id="100034688"/>
<dbReference type="KEGG" id="ptr:100034688"/>
<dbReference type="CTD" id="56101"/>
<dbReference type="InParanoid" id="Q5DRA7"/>
<dbReference type="OrthoDB" id="11406at9604"/>
<dbReference type="Proteomes" id="UP000002277">
    <property type="component" value="Unplaced"/>
</dbReference>
<dbReference type="GO" id="GO:0005886">
    <property type="term" value="C:plasma membrane"/>
    <property type="evidence" value="ECO:0000318"/>
    <property type="project" value="GO_Central"/>
</dbReference>
<dbReference type="GO" id="GO:0005509">
    <property type="term" value="F:calcium ion binding"/>
    <property type="evidence" value="ECO:0007669"/>
    <property type="project" value="InterPro"/>
</dbReference>
<dbReference type="GO" id="GO:0007155">
    <property type="term" value="P:cell adhesion"/>
    <property type="evidence" value="ECO:0000318"/>
    <property type="project" value="GO_Central"/>
</dbReference>
<dbReference type="GO" id="GO:0007156">
    <property type="term" value="P:homophilic cell adhesion via plasma membrane adhesion molecules"/>
    <property type="evidence" value="ECO:0007669"/>
    <property type="project" value="InterPro"/>
</dbReference>
<dbReference type="GO" id="GO:0007399">
    <property type="term" value="P:nervous system development"/>
    <property type="evidence" value="ECO:0007669"/>
    <property type="project" value="UniProtKB-ARBA"/>
</dbReference>
<dbReference type="CDD" id="cd11304">
    <property type="entry name" value="Cadherin_repeat"/>
    <property type="match status" value="6"/>
</dbReference>
<dbReference type="FunFam" id="2.60.40.60:FF:000004">
    <property type="entry name" value="Protocadherin 1 gamma 2"/>
    <property type="match status" value="1"/>
</dbReference>
<dbReference type="FunFam" id="2.60.40.60:FF:000001">
    <property type="entry name" value="Protocadherin alpha 2"/>
    <property type="match status" value="1"/>
</dbReference>
<dbReference type="FunFam" id="2.60.40.60:FF:000002">
    <property type="entry name" value="Protocadherin alpha 2"/>
    <property type="match status" value="1"/>
</dbReference>
<dbReference type="FunFam" id="2.60.40.60:FF:000006">
    <property type="entry name" value="Protocadherin alpha 2"/>
    <property type="match status" value="1"/>
</dbReference>
<dbReference type="FunFam" id="2.60.40.60:FF:000129">
    <property type="entry name" value="protocadherin alpha-C2 isoform X1"/>
    <property type="match status" value="1"/>
</dbReference>
<dbReference type="FunFam" id="2.60.40.60:FF:000018">
    <property type="entry name" value="Protocadherin gamma c3"/>
    <property type="match status" value="1"/>
</dbReference>
<dbReference type="Gene3D" id="2.60.40.60">
    <property type="entry name" value="Cadherins"/>
    <property type="match status" value="6"/>
</dbReference>
<dbReference type="InterPro" id="IPR002126">
    <property type="entry name" value="Cadherin-like_dom"/>
</dbReference>
<dbReference type="InterPro" id="IPR015919">
    <property type="entry name" value="Cadherin-like_sf"/>
</dbReference>
<dbReference type="InterPro" id="IPR032455">
    <property type="entry name" value="Cadherin_C"/>
</dbReference>
<dbReference type="InterPro" id="IPR031904">
    <property type="entry name" value="Cadherin_CBD"/>
</dbReference>
<dbReference type="InterPro" id="IPR020894">
    <property type="entry name" value="Cadherin_CS"/>
</dbReference>
<dbReference type="InterPro" id="IPR013164">
    <property type="entry name" value="Cadherin_N"/>
</dbReference>
<dbReference type="InterPro" id="IPR050174">
    <property type="entry name" value="Protocadherin/Cadherin-CA"/>
</dbReference>
<dbReference type="PANTHER" id="PTHR24028">
    <property type="entry name" value="CADHERIN-87A"/>
    <property type="match status" value="1"/>
</dbReference>
<dbReference type="PANTHER" id="PTHR24028:SF73">
    <property type="entry name" value="PROTOCADHERIN GAMMA-B3-RELATED"/>
    <property type="match status" value="1"/>
</dbReference>
<dbReference type="Pfam" id="PF00028">
    <property type="entry name" value="Cadherin"/>
    <property type="match status" value="5"/>
</dbReference>
<dbReference type="Pfam" id="PF08266">
    <property type="entry name" value="Cadherin_2"/>
    <property type="match status" value="1"/>
</dbReference>
<dbReference type="Pfam" id="PF16492">
    <property type="entry name" value="Cadherin_C_2"/>
    <property type="match status" value="1"/>
</dbReference>
<dbReference type="Pfam" id="PF15974">
    <property type="entry name" value="Cadherin_tail"/>
    <property type="match status" value="1"/>
</dbReference>
<dbReference type="PRINTS" id="PR00205">
    <property type="entry name" value="CADHERIN"/>
</dbReference>
<dbReference type="SMART" id="SM00112">
    <property type="entry name" value="CA"/>
    <property type="match status" value="6"/>
</dbReference>
<dbReference type="SUPFAM" id="SSF49313">
    <property type="entry name" value="Cadherin-like"/>
    <property type="match status" value="6"/>
</dbReference>
<dbReference type="PROSITE" id="PS00232">
    <property type="entry name" value="CADHERIN_1"/>
    <property type="match status" value="5"/>
</dbReference>
<dbReference type="PROSITE" id="PS50268">
    <property type="entry name" value="CADHERIN_2"/>
    <property type="match status" value="6"/>
</dbReference>
<accession>Q5DRA7</accession>
<name>PCDGH_PANTR</name>
<evidence type="ECO:0000250" key="1"/>
<evidence type="ECO:0000255" key="2"/>
<evidence type="ECO:0000255" key="3">
    <source>
        <dbReference type="PROSITE-ProRule" id="PRU00043"/>
    </source>
</evidence>
<evidence type="ECO:0000256" key="4">
    <source>
        <dbReference type="SAM" id="MobiDB-lite"/>
    </source>
</evidence>
<organism>
    <name type="scientific">Pan troglodytes</name>
    <name type="common">Chimpanzee</name>
    <dbReference type="NCBI Taxonomy" id="9598"/>
    <lineage>
        <taxon>Eukaryota</taxon>
        <taxon>Metazoa</taxon>
        <taxon>Chordata</taxon>
        <taxon>Craniata</taxon>
        <taxon>Vertebrata</taxon>
        <taxon>Euteleostomi</taxon>
        <taxon>Mammalia</taxon>
        <taxon>Eutheria</taxon>
        <taxon>Euarchontoglires</taxon>
        <taxon>Primates</taxon>
        <taxon>Haplorrhini</taxon>
        <taxon>Catarrhini</taxon>
        <taxon>Hominidae</taxon>
        <taxon>Pan</taxon>
    </lineage>
</organism>
<sequence length="923" mass="100047">MGRGTGELGRAERLPVLFLFLLSLFCPALCEQIRYRIPEEMPKGSVVGNLATDLGFSVQELPTRKLRVSSEKPYFTVSAESGELLVSSRLDREEICGKKPACALEFEAVAENPLNFYHVNVEIEDINDHTPKFTQNSFELQISESAQPGTRFILEVAEDADIGLNSLQKYKLSLNPSFSLIIKEKQDGSKYPELALEKTLDREQQSYHRLVLTALDGGNPPLSGTTELRIQVTDANDNPPVFNRDVYRVSLRENVPPGTTVLQVSATDQDEGINSEITYSFYRTGQIFSLNSKSGEITTQKKLDFEETKEYSMVVEGRDGGGLVAQCTVEINIQDENDNSPEVTFHSLLEMILENAVPGTLIALIKIHDQDSGENGEVNCQLQGEVPFKIISSSKNSYKLVTDGTLDREQTPEYNVTITATDRGKPPLSSSISVILHIRDVNDNAPVFHQASYLVSVPENNPPGASIAQVCASDLDLGLNGQVSYSIMASDLEPLALASYVSMSAQSGVVFAQRAFDYEQLRTFELTLQARDQGSPALSANVSLRVLVGDRNDNAPRVLYPALGPDGSALFDMVPRAAEPGYLVTKVVAVDADSGHNAWLSYHVLHASEPGLFSLGLRTGEVRTARALGDRDAARQRLLVAVRDGGQPPLSATATLHLVFADSLQEVLPDITDRPVPSDPQAELQFYLVVALALISVLFLLAVILAIALRLRRSSSPAAWSCFQPGLCVKSGPVVPPNYSEGTLPYSYNLCVAHTGKTEFNFLKCSEQLSSEQDILCGDSSGALFPLCNSSESTSHPELQAPPNTDWRFSQAQRPGTSGSQNGDDTGTWPNNQFDTEMLQAMILASASEAADGSSTLGGGAGTMGLSARYGPQFTLQHVPDYRQNVYIPGSNATLTNAAGKRDGKAPAGGNGNKKKSGKKEKK</sequence>
<feature type="signal peptide" evidence="2">
    <location>
        <begin position="1"/>
        <end position="30"/>
    </location>
</feature>
<feature type="chain" id="PRO_0000003980" description="Protocadherin gamma-B5">
    <location>
        <begin position="31"/>
        <end position="923"/>
    </location>
</feature>
<feature type="topological domain" description="Extracellular" evidence="2">
    <location>
        <begin position="31"/>
        <end position="687"/>
    </location>
</feature>
<feature type="transmembrane region" description="Helical" evidence="2">
    <location>
        <begin position="688"/>
        <end position="708"/>
    </location>
</feature>
<feature type="topological domain" description="Cytoplasmic" evidence="2">
    <location>
        <begin position="709"/>
        <end position="923"/>
    </location>
</feature>
<feature type="domain" description="Cadherin 1" evidence="3">
    <location>
        <begin position="31"/>
        <end position="133"/>
    </location>
</feature>
<feature type="domain" description="Cadherin 2" evidence="3">
    <location>
        <begin position="134"/>
        <end position="242"/>
    </location>
</feature>
<feature type="domain" description="Cadherin 3" evidence="3">
    <location>
        <begin position="243"/>
        <end position="343"/>
    </location>
</feature>
<feature type="domain" description="Cadherin 4" evidence="3">
    <location>
        <begin position="344"/>
        <end position="448"/>
    </location>
</feature>
<feature type="domain" description="Cadherin 5" evidence="3">
    <location>
        <begin position="449"/>
        <end position="558"/>
    </location>
</feature>
<feature type="domain" description="Cadherin 6" evidence="3">
    <location>
        <begin position="566"/>
        <end position="671"/>
    </location>
</feature>
<feature type="region of interest" description="Disordered" evidence="4">
    <location>
        <begin position="794"/>
        <end position="832"/>
    </location>
</feature>
<feature type="region of interest" description="Disordered" evidence="4">
    <location>
        <begin position="893"/>
        <end position="923"/>
    </location>
</feature>
<feature type="compositionally biased region" description="Polar residues" evidence="4">
    <location>
        <begin position="807"/>
        <end position="832"/>
    </location>
</feature>
<feature type="compositionally biased region" description="Basic residues" evidence="4">
    <location>
        <begin position="913"/>
        <end position="923"/>
    </location>
</feature>
<feature type="glycosylation site" description="N-linked (GlcNAc...) asparagine" evidence="2">
    <location>
        <position position="415"/>
    </location>
</feature>
<feature type="glycosylation site" description="N-linked (GlcNAc...) asparagine" evidence="2">
    <location>
        <position position="541"/>
    </location>
</feature>
<gene>
    <name type="primary">PCDHGB5</name>
</gene>